<dbReference type="EC" id="2.7.11.1"/>
<dbReference type="EMBL" id="HE600983">
    <property type="protein sequence ID" value="CAP32944.2"/>
    <property type="molecule type" value="Genomic_DNA"/>
</dbReference>
<dbReference type="SMR" id="A8XJW8"/>
<dbReference type="FunCoup" id="A8XJW8">
    <property type="interactions" value="2329"/>
</dbReference>
<dbReference type="STRING" id="6238.A8XJW8"/>
<dbReference type="EnsemblMetazoa" id="CBG14395.1">
    <property type="protein sequence ID" value="CBG14395.1"/>
    <property type="gene ID" value="WBGene00034914"/>
</dbReference>
<dbReference type="WormBase" id="CBG14395">
    <property type="protein sequence ID" value="CBP35565"/>
    <property type="gene ID" value="WBGene00034914"/>
    <property type="gene designation" value="Cbr-cst-1"/>
</dbReference>
<dbReference type="eggNOG" id="KOG0574">
    <property type="taxonomic scope" value="Eukaryota"/>
</dbReference>
<dbReference type="HOGENOM" id="CLU_000288_63_23_1"/>
<dbReference type="InParanoid" id="A8XJW8"/>
<dbReference type="OMA" id="WSEEFND"/>
<dbReference type="Proteomes" id="UP000008549">
    <property type="component" value="Unassembled WGS sequence"/>
</dbReference>
<dbReference type="GO" id="GO:0005737">
    <property type="term" value="C:cytoplasm"/>
    <property type="evidence" value="ECO:0000318"/>
    <property type="project" value="GO_Central"/>
</dbReference>
<dbReference type="GO" id="GO:0005524">
    <property type="term" value="F:ATP binding"/>
    <property type="evidence" value="ECO:0007669"/>
    <property type="project" value="UniProtKB-KW"/>
</dbReference>
<dbReference type="GO" id="GO:0106310">
    <property type="term" value="F:protein serine kinase activity"/>
    <property type="evidence" value="ECO:0007669"/>
    <property type="project" value="RHEA"/>
</dbReference>
<dbReference type="GO" id="GO:0004674">
    <property type="term" value="F:protein serine/threonine kinase activity"/>
    <property type="evidence" value="ECO:0000318"/>
    <property type="project" value="GO_Central"/>
</dbReference>
<dbReference type="GO" id="GO:0008340">
    <property type="term" value="P:determination of adult lifespan"/>
    <property type="evidence" value="ECO:0000250"/>
    <property type="project" value="UniProtKB"/>
</dbReference>
<dbReference type="GO" id="GO:0035556">
    <property type="term" value="P:intracellular signal transduction"/>
    <property type="evidence" value="ECO:0000318"/>
    <property type="project" value="GO_Central"/>
</dbReference>
<dbReference type="GO" id="GO:0055001">
    <property type="term" value="P:muscle cell development"/>
    <property type="evidence" value="ECO:0000250"/>
    <property type="project" value="UniProtKB"/>
</dbReference>
<dbReference type="GO" id="GO:0090090">
    <property type="term" value="P:negative regulation of canonical Wnt signaling pathway"/>
    <property type="evidence" value="ECO:0000318"/>
    <property type="project" value="GO_Central"/>
</dbReference>
<dbReference type="GO" id="GO:0043065">
    <property type="term" value="P:positive regulation of apoptotic process"/>
    <property type="evidence" value="ECO:0000318"/>
    <property type="project" value="GO_Central"/>
</dbReference>
<dbReference type="GO" id="GO:0051262">
    <property type="term" value="P:protein tetramerization"/>
    <property type="evidence" value="ECO:0007669"/>
    <property type="project" value="InterPro"/>
</dbReference>
<dbReference type="GO" id="GO:0043408">
    <property type="term" value="P:regulation of MAPK cascade"/>
    <property type="evidence" value="ECO:0000318"/>
    <property type="project" value="GO_Central"/>
</dbReference>
<dbReference type="CDD" id="cd21884">
    <property type="entry name" value="SARAH_MST_Hpo"/>
    <property type="match status" value="1"/>
</dbReference>
<dbReference type="CDD" id="cd06612">
    <property type="entry name" value="STKc_MST1_2"/>
    <property type="match status" value="1"/>
</dbReference>
<dbReference type="FunFam" id="3.30.200.20:FF:000040">
    <property type="entry name" value="Dual specificity mitogen-activated protein kinase kinase"/>
    <property type="match status" value="1"/>
</dbReference>
<dbReference type="FunFam" id="1.10.510.10:FF:000605">
    <property type="entry name" value="serine/threonine-protein kinase 3 isoform X2"/>
    <property type="match status" value="1"/>
</dbReference>
<dbReference type="Gene3D" id="4.10.170.10">
    <property type="entry name" value="p53-like tetramerisation domain"/>
    <property type="match status" value="1"/>
</dbReference>
<dbReference type="Gene3D" id="1.10.510.10">
    <property type="entry name" value="Transferase(Phosphotransferase) domain 1"/>
    <property type="match status" value="1"/>
</dbReference>
<dbReference type="InterPro" id="IPR011009">
    <property type="entry name" value="Kinase-like_dom_sf"/>
</dbReference>
<dbReference type="InterPro" id="IPR024205">
    <property type="entry name" value="Mst1_2_SARAH_domain"/>
</dbReference>
<dbReference type="InterPro" id="IPR036674">
    <property type="entry name" value="p53_tetramer_sf"/>
</dbReference>
<dbReference type="InterPro" id="IPR000719">
    <property type="entry name" value="Prot_kinase_dom"/>
</dbReference>
<dbReference type="InterPro" id="IPR017441">
    <property type="entry name" value="Protein_kinase_ATP_BS"/>
</dbReference>
<dbReference type="InterPro" id="IPR011524">
    <property type="entry name" value="SARAH_dom"/>
</dbReference>
<dbReference type="InterPro" id="IPR050629">
    <property type="entry name" value="STE20/SPS1-PAK"/>
</dbReference>
<dbReference type="PANTHER" id="PTHR48012:SF2">
    <property type="entry name" value="STERILE20-LIKE KINASE, ISOFORM B"/>
    <property type="match status" value="1"/>
</dbReference>
<dbReference type="PANTHER" id="PTHR48012">
    <property type="entry name" value="STERILE20-LIKE KINASE, ISOFORM B-RELATED"/>
    <property type="match status" value="1"/>
</dbReference>
<dbReference type="Pfam" id="PF11629">
    <property type="entry name" value="Mst1_SARAH"/>
    <property type="match status" value="1"/>
</dbReference>
<dbReference type="Pfam" id="PF00069">
    <property type="entry name" value="Pkinase"/>
    <property type="match status" value="1"/>
</dbReference>
<dbReference type="SMART" id="SM00220">
    <property type="entry name" value="S_TKc"/>
    <property type="match status" value="1"/>
</dbReference>
<dbReference type="SUPFAM" id="SSF56112">
    <property type="entry name" value="Protein kinase-like (PK-like)"/>
    <property type="match status" value="1"/>
</dbReference>
<dbReference type="PROSITE" id="PS00107">
    <property type="entry name" value="PROTEIN_KINASE_ATP"/>
    <property type="match status" value="1"/>
</dbReference>
<dbReference type="PROSITE" id="PS50011">
    <property type="entry name" value="PROTEIN_KINASE_DOM"/>
    <property type="match status" value="1"/>
</dbReference>
<dbReference type="PROSITE" id="PS50951">
    <property type="entry name" value="SARAH"/>
    <property type="match status" value="1"/>
</dbReference>
<organism>
    <name type="scientific">Caenorhabditis briggsae</name>
    <dbReference type="NCBI Taxonomy" id="6238"/>
    <lineage>
        <taxon>Eukaryota</taxon>
        <taxon>Metazoa</taxon>
        <taxon>Ecdysozoa</taxon>
        <taxon>Nematoda</taxon>
        <taxon>Chromadorea</taxon>
        <taxon>Rhabditida</taxon>
        <taxon>Rhabditina</taxon>
        <taxon>Rhabditomorpha</taxon>
        <taxon>Rhabditoidea</taxon>
        <taxon>Rhabditidae</taxon>
        <taxon>Peloderinae</taxon>
        <taxon>Caenorhabditis</taxon>
    </lineage>
</organism>
<keyword id="KW-0067">ATP-binding</keyword>
<keyword id="KW-0418">Kinase</keyword>
<keyword id="KW-0547">Nucleotide-binding</keyword>
<keyword id="KW-1185">Reference proteome</keyword>
<keyword id="KW-0723">Serine/threonine-protein kinase</keyword>
<keyword id="KW-0808">Transferase</keyword>
<protein>
    <recommendedName>
        <fullName evidence="2">Serine/threonine-protein kinase cst-1</fullName>
        <ecNumber>2.7.11.1</ecNumber>
    </recommendedName>
    <component>
        <recommendedName>
            <fullName>Serine/threonine-protein kinase cst-1 37kDa subunit</fullName>
        </recommendedName>
    </component>
    <component>
        <recommendedName>
            <fullName>Serine/threonine-protein kinase cst-1 18kDa subunit</fullName>
        </recommendedName>
    </component>
</protein>
<feature type="chain" id="PRO_0000396640" description="Serine/threonine-protein kinase cst-1">
    <location>
        <begin position="1"/>
        <end position="494"/>
    </location>
</feature>
<feature type="chain" id="PRO_0000413723" description="Serine/threonine-protein kinase cst-1 37kDa subunit" evidence="1">
    <location>
        <begin position="1"/>
        <end position="332"/>
    </location>
</feature>
<feature type="chain" id="PRO_0000413724" description="Serine/threonine-protein kinase cst-1 18kDa subunit" evidence="1">
    <location>
        <begin position="333"/>
        <end position="494"/>
    </location>
</feature>
<feature type="domain" description="Protein kinase" evidence="5">
    <location>
        <begin position="35"/>
        <end position="286"/>
    </location>
</feature>
<feature type="domain" description="SARAH" evidence="6">
    <location>
        <begin position="443"/>
        <end position="490"/>
    </location>
</feature>
<feature type="region of interest" description="Disordered" evidence="7">
    <location>
        <begin position="1"/>
        <end position="27"/>
    </location>
</feature>
<feature type="region of interest" description="Disordered" evidence="7">
    <location>
        <begin position="364"/>
        <end position="413"/>
    </location>
</feature>
<feature type="compositionally biased region" description="Polar residues" evidence="7">
    <location>
        <begin position="369"/>
        <end position="378"/>
    </location>
</feature>
<feature type="active site" description="Proton acceptor" evidence="5">
    <location>
        <position position="154"/>
    </location>
</feature>
<feature type="binding site" evidence="5">
    <location>
        <begin position="41"/>
        <end position="49"/>
    </location>
    <ligand>
        <name>ATP</name>
        <dbReference type="ChEBI" id="CHEBI:30616"/>
    </ligand>
</feature>
<feature type="binding site" evidence="5">
    <location>
        <position position="64"/>
    </location>
    <ligand>
        <name>ATP</name>
        <dbReference type="ChEBI" id="CHEBI:30616"/>
    </ligand>
</feature>
<feature type="site" description="Cleavage; by caspase-3" evidence="1">
    <location>
        <begin position="332"/>
        <end position="333"/>
    </location>
</feature>
<sequence>MPPSTDSSRRNSEEGFSDGFKLDSSALNKPPEEVFDIVGKLGEGSYGSVHKAIHKESGHVLAIKKVPVDTDLQEIIKEISIMQQCKSKYVVKYYGSYFKNSDLWIVMEYCGAGSISDIMRARRKPLSEKEISAVLRDTLKGLQYLHDLKKIHRDIKAGNILLNTDGIAKLADFGVAGQLTDTMAKRNTVIGTPFWMAPEVIEEIGYDTKADIWSLGITAIEMAEGRPPYSDIHPMRAIFMIPTKPPPTFKKPEEWSSEFNDFIRCCLIKKPEERKTALRLCEHTFIENAPGCDVLQAMILDAQEKVLLGQAPVAVAGADATLLSEGMSTMIDGGDATLVQYKDNYVTAQSLRSQMESLKIGGEIPKSAYGSSRNNGSPRVQPPGHTASACDPSNNPPFAEEGTGPNFQIGTSESSYKDASYNMMNTEAEYENRFQRAVCDGDFEFLRNITLDELIRRKESLDSEMEEEIRELQRRYKTKRQPILDVIEIKKRLN</sequence>
<evidence type="ECO:0000250" key="1"/>
<evidence type="ECO:0000250" key="2">
    <source>
        <dbReference type="UniProtKB" id="Q13188"/>
    </source>
</evidence>
<evidence type="ECO:0000250" key="3">
    <source>
        <dbReference type="UniProtKB" id="Q9NB31"/>
    </source>
</evidence>
<evidence type="ECO:0000255" key="4"/>
<evidence type="ECO:0000255" key="5">
    <source>
        <dbReference type="PROSITE-ProRule" id="PRU00159"/>
    </source>
</evidence>
<evidence type="ECO:0000255" key="6">
    <source>
        <dbReference type="PROSITE-ProRule" id="PRU00310"/>
    </source>
</evidence>
<evidence type="ECO:0000256" key="7">
    <source>
        <dbReference type="SAM" id="MobiDB-lite"/>
    </source>
</evidence>
<name>CST1_CAEBR</name>
<reference key="1">
    <citation type="journal article" date="2003" name="PLoS Biol.">
        <title>The genome sequence of Caenorhabditis briggsae: a platform for comparative genomics.</title>
        <authorList>
            <person name="Stein L.D."/>
            <person name="Bao Z."/>
            <person name="Blasiar D."/>
            <person name="Blumenthal T."/>
            <person name="Brent M.R."/>
            <person name="Chen N."/>
            <person name="Chinwalla A."/>
            <person name="Clarke L."/>
            <person name="Clee C."/>
            <person name="Coghlan A."/>
            <person name="Coulson A."/>
            <person name="D'Eustachio P."/>
            <person name="Fitch D.H.A."/>
            <person name="Fulton L.A."/>
            <person name="Fulton R.E."/>
            <person name="Griffiths-Jones S."/>
            <person name="Harris T.W."/>
            <person name="Hillier L.W."/>
            <person name="Kamath R."/>
            <person name="Kuwabara P.E."/>
            <person name="Mardis E.R."/>
            <person name="Marra M.A."/>
            <person name="Miner T.L."/>
            <person name="Minx P."/>
            <person name="Mullikin J.C."/>
            <person name="Plumb R.W."/>
            <person name="Rogers J."/>
            <person name="Schein J.E."/>
            <person name="Sohrmann M."/>
            <person name="Spieth J."/>
            <person name="Stajich J.E."/>
            <person name="Wei C."/>
            <person name="Willey D."/>
            <person name="Wilson R.K."/>
            <person name="Durbin R.M."/>
            <person name="Waterston R.H."/>
        </authorList>
    </citation>
    <scope>NUCLEOTIDE SEQUENCE [LARGE SCALE GENOMIC DNA]</scope>
    <source>
        <strain>AF16</strain>
    </source>
</reference>
<proteinExistence type="inferred from homology"/>
<comment type="function">
    <text evidence="3">Serine/threonine-protein kinase which extends lifespan and delays tissue aging, probably by activating daf-16.</text>
</comment>
<comment type="catalytic activity">
    <reaction evidence="2">
        <text>L-seryl-[protein] + ATP = O-phospho-L-seryl-[protein] + ADP + H(+)</text>
        <dbReference type="Rhea" id="RHEA:17989"/>
        <dbReference type="Rhea" id="RHEA-COMP:9863"/>
        <dbReference type="Rhea" id="RHEA-COMP:11604"/>
        <dbReference type="ChEBI" id="CHEBI:15378"/>
        <dbReference type="ChEBI" id="CHEBI:29999"/>
        <dbReference type="ChEBI" id="CHEBI:30616"/>
        <dbReference type="ChEBI" id="CHEBI:83421"/>
        <dbReference type="ChEBI" id="CHEBI:456216"/>
        <dbReference type="EC" id="2.7.11.1"/>
    </reaction>
</comment>
<comment type="catalytic activity">
    <reaction evidence="2">
        <text>L-threonyl-[protein] + ATP = O-phospho-L-threonyl-[protein] + ADP + H(+)</text>
        <dbReference type="Rhea" id="RHEA:46608"/>
        <dbReference type="Rhea" id="RHEA-COMP:11060"/>
        <dbReference type="Rhea" id="RHEA-COMP:11605"/>
        <dbReference type="ChEBI" id="CHEBI:15378"/>
        <dbReference type="ChEBI" id="CHEBI:30013"/>
        <dbReference type="ChEBI" id="CHEBI:30616"/>
        <dbReference type="ChEBI" id="CHEBI:61977"/>
        <dbReference type="ChEBI" id="CHEBI:456216"/>
        <dbReference type="EC" id="2.7.11.1"/>
    </reaction>
</comment>
<comment type="cofactor">
    <cofactor evidence="2">
        <name>Mg(2+)</name>
        <dbReference type="ChEBI" id="CHEBI:18420"/>
    </cofactor>
</comment>
<comment type="PTM">
    <text evidence="1">Proteolytically cleaved by caspase-3 during apoptosis which results in kinase activation.</text>
</comment>
<comment type="similarity">
    <text evidence="4">Belongs to the protein kinase superfamily. STE Ser/Thr protein kinase family. STE20 subfamily.</text>
</comment>
<gene>
    <name type="primary">cst-1</name>
    <name type="ORF">CBG14395</name>
</gene>
<accession>A8XJW8</accession>